<accession>A4JFZ6</accession>
<name>SYK_BURVG</name>
<feature type="chain" id="PRO_1000012860" description="Lysine--tRNA ligase">
    <location>
        <begin position="1"/>
        <end position="508"/>
    </location>
</feature>
<feature type="binding site" evidence="1">
    <location>
        <position position="418"/>
    </location>
    <ligand>
        <name>Mg(2+)</name>
        <dbReference type="ChEBI" id="CHEBI:18420"/>
        <label>1</label>
    </ligand>
</feature>
<feature type="binding site" evidence="1">
    <location>
        <position position="425"/>
    </location>
    <ligand>
        <name>Mg(2+)</name>
        <dbReference type="ChEBI" id="CHEBI:18420"/>
        <label>1</label>
    </ligand>
</feature>
<feature type="binding site" evidence="1">
    <location>
        <position position="425"/>
    </location>
    <ligand>
        <name>Mg(2+)</name>
        <dbReference type="ChEBI" id="CHEBI:18420"/>
        <label>2</label>
    </ligand>
</feature>
<organism>
    <name type="scientific">Burkholderia vietnamiensis (strain G4 / LMG 22486)</name>
    <name type="common">Burkholderia cepacia (strain R1808)</name>
    <dbReference type="NCBI Taxonomy" id="269482"/>
    <lineage>
        <taxon>Bacteria</taxon>
        <taxon>Pseudomonadati</taxon>
        <taxon>Pseudomonadota</taxon>
        <taxon>Betaproteobacteria</taxon>
        <taxon>Burkholderiales</taxon>
        <taxon>Burkholderiaceae</taxon>
        <taxon>Burkholderia</taxon>
        <taxon>Burkholderia cepacia complex</taxon>
    </lineage>
</organism>
<proteinExistence type="inferred from homology"/>
<comment type="catalytic activity">
    <reaction evidence="1">
        <text>tRNA(Lys) + L-lysine + ATP = L-lysyl-tRNA(Lys) + AMP + diphosphate</text>
        <dbReference type="Rhea" id="RHEA:20792"/>
        <dbReference type="Rhea" id="RHEA-COMP:9696"/>
        <dbReference type="Rhea" id="RHEA-COMP:9697"/>
        <dbReference type="ChEBI" id="CHEBI:30616"/>
        <dbReference type="ChEBI" id="CHEBI:32551"/>
        <dbReference type="ChEBI" id="CHEBI:33019"/>
        <dbReference type="ChEBI" id="CHEBI:78442"/>
        <dbReference type="ChEBI" id="CHEBI:78529"/>
        <dbReference type="ChEBI" id="CHEBI:456215"/>
        <dbReference type="EC" id="6.1.1.6"/>
    </reaction>
</comment>
<comment type="cofactor">
    <cofactor evidence="1">
        <name>Mg(2+)</name>
        <dbReference type="ChEBI" id="CHEBI:18420"/>
    </cofactor>
    <text evidence="1">Binds 3 Mg(2+) ions per subunit.</text>
</comment>
<comment type="subunit">
    <text evidence="1">Homodimer.</text>
</comment>
<comment type="subcellular location">
    <subcellularLocation>
        <location evidence="1">Cytoplasm</location>
    </subcellularLocation>
</comment>
<comment type="similarity">
    <text evidence="1">Belongs to the class-II aminoacyl-tRNA synthetase family.</text>
</comment>
<sequence length="508" mass="57543">MTEPTQTQPAVAADENQIIAERRDKLRALREQGVAYPNDFRPTHHAAELQSTYADSDKAALEANPVEVSVAGRMMLKRVMGKASFATVQDGSGQIQFFVTPNDVGAETYDAFKKWDLGDIVAARGVLFRTNKGELSVQCKELRLLAKALRPLPDKFHGLADQEMRYRQRYVDLIVTPETRDTFRARTKTISSIRRFMENADFMEVETPMLHPIPGGAAAKPFITHHNALDMQMFLRIAPELYLKRLIVGGFERVFEINRNFRNEGVSPRHNPEFTMMEFYAAYTDYRWLMDFTEQLIRQAAIDALGTATIQYQGRELDLAKPFHRLTITQAIQKYAPQYTDGQLSDDAFLRTELKRLGVDVSQPAFLNAGIGALQLALFEETAESQLWEPTYIIDYPVEVSPLARASDTVPGITERFELFMTGREIANGFSELNDPEDQAARFKKQVEQKDAGDEEAMFFDADYIRALEHGMPPTGGCGIGIDRLVMLLTDSPTIRDVLLFPHLRRED</sequence>
<gene>
    <name evidence="1" type="primary">lysS</name>
    <name type="ordered locus">Bcep1808_2197</name>
</gene>
<dbReference type="EC" id="6.1.1.6" evidence="1"/>
<dbReference type="EMBL" id="CP000614">
    <property type="protein sequence ID" value="ABO55199.1"/>
    <property type="molecule type" value="Genomic_DNA"/>
</dbReference>
<dbReference type="SMR" id="A4JFZ6"/>
<dbReference type="KEGG" id="bvi:Bcep1808_2197"/>
<dbReference type="eggNOG" id="COG1190">
    <property type="taxonomic scope" value="Bacteria"/>
</dbReference>
<dbReference type="HOGENOM" id="CLU_008255_6_0_4"/>
<dbReference type="Proteomes" id="UP000002287">
    <property type="component" value="Chromosome 1"/>
</dbReference>
<dbReference type="GO" id="GO:0005829">
    <property type="term" value="C:cytosol"/>
    <property type="evidence" value="ECO:0007669"/>
    <property type="project" value="TreeGrafter"/>
</dbReference>
<dbReference type="GO" id="GO:0005524">
    <property type="term" value="F:ATP binding"/>
    <property type="evidence" value="ECO:0007669"/>
    <property type="project" value="UniProtKB-UniRule"/>
</dbReference>
<dbReference type="GO" id="GO:0004824">
    <property type="term" value="F:lysine-tRNA ligase activity"/>
    <property type="evidence" value="ECO:0007669"/>
    <property type="project" value="UniProtKB-UniRule"/>
</dbReference>
<dbReference type="GO" id="GO:0000287">
    <property type="term" value="F:magnesium ion binding"/>
    <property type="evidence" value="ECO:0007669"/>
    <property type="project" value="UniProtKB-UniRule"/>
</dbReference>
<dbReference type="GO" id="GO:0000049">
    <property type="term" value="F:tRNA binding"/>
    <property type="evidence" value="ECO:0007669"/>
    <property type="project" value="TreeGrafter"/>
</dbReference>
<dbReference type="GO" id="GO:0006430">
    <property type="term" value="P:lysyl-tRNA aminoacylation"/>
    <property type="evidence" value="ECO:0007669"/>
    <property type="project" value="UniProtKB-UniRule"/>
</dbReference>
<dbReference type="CDD" id="cd00775">
    <property type="entry name" value="LysRS_core"/>
    <property type="match status" value="1"/>
</dbReference>
<dbReference type="CDD" id="cd04322">
    <property type="entry name" value="LysRS_N"/>
    <property type="match status" value="1"/>
</dbReference>
<dbReference type="FunFam" id="2.40.50.140:FF:000024">
    <property type="entry name" value="Lysine--tRNA ligase"/>
    <property type="match status" value="1"/>
</dbReference>
<dbReference type="FunFam" id="3.30.930.10:FF:000001">
    <property type="entry name" value="Lysine--tRNA ligase"/>
    <property type="match status" value="1"/>
</dbReference>
<dbReference type="Gene3D" id="3.30.930.10">
    <property type="entry name" value="Bira Bifunctional Protein, Domain 2"/>
    <property type="match status" value="1"/>
</dbReference>
<dbReference type="Gene3D" id="2.40.50.140">
    <property type="entry name" value="Nucleic acid-binding proteins"/>
    <property type="match status" value="1"/>
</dbReference>
<dbReference type="HAMAP" id="MF_00252">
    <property type="entry name" value="Lys_tRNA_synth_class2"/>
    <property type="match status" value="1"/>
</dbReference>
<dbReference type="InterPro" id="IPR004364">
    <property type="entry name" value="Aa-tRNA-synt_II"/>
</dbReference>
<dbReference type="InterPro" id="IPR006195">
    <property type="entry name" value="aa-tRNA-synth_II"/>
</dbReference>
<dbReference type="InterPro" id="IPR045864">
    <property type="entry name" value="aa-tRNA-synth_II/BPL/LPL"/>
</dbReference>
<dbReference type="InterPro" id="IPR002313">
    <property type="entry name" value="Lys-tRNA-ligase_II"/>
</dbReference>
<dbReference type="InterPro" id="IPR044136">
    <property type="entry name" value="Lys-tRNA-ligase_II_N"/>
</dbReference>
<dbReference type="InterPro" id="IPR018149">
    <property type="entry name" value="Lys-tRNA-synth_II_C"/>
</dbReference>
<dbReference type="InterPro" id="IPR012340">
    <property type="entry name" value="NA-bd_OB-fold"/>
</dbReference>
<dbReference type="InterPro" id="IPR004365">
    <property type="entry name" value="NA-bd_OB_tRNA"/>
</dbReference>
<dbReference type="NCBIfam" id="TIGR00499">
    <property type="entry name" value="lysS_bact"/>
    <property type="match status" value="1"/>
</dbReference>
<dbReference type="NCBIfam" id="NF001756">
    <property type="entry name" value="PRK00484.1"/>
    <property type="match status" value="1"/>
</dbReference>
<dbReference type="PANTHER" id="PTHR42918:SF15">
    <property type="entry name" value="LYSINE--TRNA LIGASE, CHLOROPLASTIC_MITOCHONDRIAL"/>
    <property type="match status" value="1"/>
</dbReference>
<dbReference type="PANTHER" id="PTHR42918">
    <property type="entry name" value="LYSYL-TRNA SYNTHETASE"/>
    <property type="match status" value="1"/>
</dbReference>
<dbReference type="Pfam" id="PF00152">
    <property type="entry name" value="tRNA-synt_2"/>
    <property type="match status" value="1"/>
</dbReference>
<dbReference type="Pfam" id="PF01336">
    <property type="entry name" value="tRNA_anti-codon"/>
    <property type="match status" value="1"/>
</dbReference>
<dbReference type="PRINTS" id="PR00982">
    <property type="entry name" value="TRNASYNTHLYS"/>
</dbReference>
<dbReference type="SUPFAM" id="SSF55681">
    <property type="entry name" value="Class II aaRS and biotin synthetases"/>
    <property type="match status" value="1"/>
</dbReference>
<dbReference type="SUPFAM" id="SSF50249">
    <property type="entry name" value="Nucleic acid-binding proteins"/>
    <property type="match status" value="1"/>
</dbReference>
<dbReference type="PROSITE" id="PS50862">
    <property type="entry name" value="AA_TRNA_LIGASE_II"/>
    <property type="match status" value="1"/>
</dbReference>
<protein>
    <recommendedName>
        <fullName evidence="1">Lysine--tRNA ligase</fullName>
        <ecNumber evidence="1">6.1.1.6</ecNumber>
    </recommendedName>
    <alternativeName>
        <fullName evidence="1">Lysyl-tRNA synthetase</fullName>
        <shortName evidence="1">LysRS</shortName>
    </alternativeName>
</protein>
<keyword id="KW-0030">Aminoacyl-tRNA synthetase</keyword>
<keyword id="KW-0067">ATP-binding</keyword>
<keyword id="KW-0963">Cytoplasm</keyword>
<keyword id="KW-0436">Ligase</keyword>
<keyword id="KW-0460">Magnesium</keyword>
<keyword id="KW-0479">Metal-binding</keyword>
<keyword id="KW-0547">Nucleotide-binding</keyword>
<keyword id="KW-0648">Protein biosynthesis</keyword>
<evidence type="ECO:0000255" key="1">
    <source>
        <dbReference type="HAMAP-Rule" id="MF_00252"/>
    </source>
</evidence>
<reference key="1">
    <citation type="submission" date="2007-03" db="EMBL/GenBank/DDBJ databases">
        <title>Complete sequence of chromosome 1 of Burkholderia vietnamiensis G4.</title>
        <authorList>
            <consortium name="US DOE Joint Genome Institute"/>
            <person name="Copeland A."/>
            <person name="Lucas S."/>
            <person name="Lapidus A."/>
            <person name="Barry K."/>
            <person name="Detter J.C."/>
            <person name="Glavina del Rio T."/>
            <person name="Hammon N."/>
            <person name="Israni S."/>
            <person name="Dalin E."/>
            <person name="Tice H."/>
            <person name="Pitluck S."/>
            <person name="Chain P."/>
            <person name="Malfatti S."/>
            <person name="Shin M."/>
            <person name="Vergez L."/>
            <person name="Schmutz J."/>
            <person name="Larimer F."/>
            <person name="Land M."/>
            <person name="Hauser L."/>
            <person name="Kyrpides N."/>
            <person name="Tiedje J."/>
            <person name="Richardson P."/>
        </authorList>
    </citation>
    <scope>NUCLEOTIDE SEQUENCE [LARGE SCALE GENOMIC DNA]</scope>
    <source>
        <strain>G4 / LMG 22486</strain>
    </source>
</reference>